<sequence>MKLSFTKMHGAGNDFVVLDGYTRALPPLTGAQVRALADRHFGIGADQLLLVEKPTVDGADFKYRIFNCDGGEVEHCGNGARCFVKFVRDHGLTGKASVRVEVKHGVITLTMQDNGEVVVDMGAPVFEPARVPFDASGLDGRREGADTLWPLPVNGVTRWISVVSMGNPHAVQIVDDAEAFAVRVDGPAIERDPRFPQRVNAGFMQIVSRHEVNLRVYERGAGETLACGTGACAAVAAGIRRGRLDSPVTVHTHGGTLTISWNGACDERAPLMMAGPATTVFEGVIELPA</sequence>
<organism>
    <name type="scientific">Burkholderia pseudomallei (strain 1106a)</name>
    <dbReference type="NCBI Taxonomy" id="357348"/>
    <lineage>
        <taxon>Bacteria</taxon>
        <taxon>Pseudomonadati</taxon>
        <taxon>Pseudomonadota</taxon>
        <taxon>Betaproteobacteria</taxon>
        <taxon>Burkholderiales</taxon>
        <taxon>Burkholderiaceae</taxon>
        <taxon>Burkholderia</taxon>
        <taxon>pseudomallei group</taxon>
    </lineage>
</organism>
<dbReference type="EC" id="5.1.1.7" evidence="1"/>
<dbReference type="EMBL" id="CP000572">
    <property type="protein sequence ID" value="ABN90990.1"/>
    <property type="molecule type" value="Genomic_DNA"/>
</dbReference>
<dbReference type="RefSeq" id="WP_004199067.1">
    <property type="nucleotide sequence ID" value="NC_009076.1"/>
</dbReference>
<dbReference type="SMR" id="A3NQ71"/>
<dbReference type="GeneID" id="93058719"/>
<dbReference type="KEGG" id="bpl:BURPS1106A_0209"/>
<dbReference type="HOGENOM" id="CLU_053306_1_1_4"/>
<dbReference type="UniPathway" id="UPA00034">
    <property type="reaction ID" value="UER00025"/>
</dbReference>
<dbReference type="Proteomes" id="UP000006738">
    <property type="component" value="Chromosome I"/>
</dbReference>
<dbReference type="GO" id="GO:0005829">
    <property type="term" value="C:cytosol"/>
    <property type="evidence" value="ECO:0007669"/>
    <property type="project" value="TreeGrafter"/>
</dbReference>
<dbReference type="GO" id="GO:0008837">
    <property type="term" value="F:diaminopimelate epimerase activity"/>
    <property type="evidence" value="ECO:0007669"/>
    <property type="project" value="UniProtKB-UniRule"/>
</dbReference>
<dbReference type="GO" id="GO:0009089">
    <property type="term" value="P:lysine biosynthetic process via diaminopimelate"/>
    <property type="evidence" value="ECO:0007669"/>
    <property type="project" value="UniProtKB-UniRule"/>
</dbReference>
<dbReference type="FunFam" id="3.10.310.10:FF:000001">
    <property type="entry name" value="Diaminopimelate epimerase"/>
    <property type="match status" value="1"/>
</dbReference>
<dbReference type="Gene3D" id="3.10.310.10">
    <property type="entry name" value="Diaminopimelate Epimerase, Chain A, domain 1"/>
    <property type="match status" value="2"/>
</dbReference>
<dbReference type="HAMAP" id="MF_00197">
    <property type="entry name" value="DAP_epimerase"/>
    <property type="match status" value="1"/>
</dbReference>
<dbReference type="InterPro" id="IPR018510">
    <property type="entry name" value="DAP_epimerase_AS"/>
</dbReference>
<dbReference type="InterPro" id="IPR001653">
    <property type="entry name" value="DAP_epimerase_DapF"/>
</dbReference>
<dbReference type="NCBIfam" id="TIGR00652">
    <property type="entry name" value="DapF"/>
    <property type="match status" value="1"/>
</dbReference>
<dbReference type="PANTHER" id="PTHR31689:SF0">
    <property type="entry name" value="DIAMINOPIMELATE EPIMERASE"/>
    <property type="match status" value="1"/>
</dbReference>
<dbReference type="PANTHER" id="PTHR31689">
    <property type="entry name" value="DIAMINOPIMELATE EPIMERASE, CHLOROPLASTIC"/>
    <property type="match status" value="1"/>
</dbReference>
<dbReference type="Pfam" id="PF01678">
    <property type="entry name" value="DAP_epimerase"/>
    <property type="match status" value="2"/>
</dbReference>
<dbReference type="SUPFAM" id="SSF54506">
    <property type="entry name" value="Diaminopimelate epimerase-like"/>
    <property type="match status" value="1"/>
</dbReference>
<dbReference type="PROSITE" id="PS01326">
    <property type="entry name" value="DAP_EPIMERASE"/>
    <property type="match status" value="1"/>
</dbReference>
<proteinExistence type="inferred from homology"/>
<feature type="chain" id="PRO_1000011858" description="Diaminopimelate epimerase">
    <location>
        <begin position="1"/>
        <end position="289"/>
    </location>
</feature>
<feature type="active site" description="Proton donor" evidence="1">
    <location>
        <position position="76"/>
    </location>
</feature>
<feature type="active site" description="Proton acceptor" evidence="1">
    <location>
        <position position="227"/>
    </location>
</feature>
<feature type="binding site" evidence="1">
    <location>
        <position position="13"/>
    </location>
    <ligand>
        <name>substrate</name>
    </ligand>
</feature>
<feature type="binding site" evidence="1">
    <location>
        <position position="47"/>
    </location>
    <ligand>
        <name>substrate</name>
    </ligand>
</feature>
<feature type="binding site" evidence="1">
    <location>
        <position position="67"/>
    </location>
    <ligand>
        <name>substrate</name>
    </ligand>
</feature>
<feature type="binding site" evidence="1">
    <location>
        <begin position="77"/>
        <end position="78"/>
    </location>
    <ligand>
        <name>substrate</name>
    </ligand>
</feature>
<feature type="binding site" evidence="1">
    <location>
        <position position="167"/>
    </location>
    <ligand>
        <name>substrate</name>
    </ligand>
</feature>
<feature type="binding site" evidence="1">
    <location>
        <position position="200"/>
    </location>
    <ligand>
        <name>substrate</name>
    </ligand>
</feature>
<feature type="binding site" evidence="1">
    <location>
        <begin position="218"/>
        <end position="219"/>
    </location>
    <ligand>
        <name>substrate</name>
    </ligand>
</feature>
<feature type="binding site" evidence="1">
    <location>
        <begin position="228"/>
        <end position="229"/>
    </location>
    <ligand>
        <name>substrate</name>
    </ligand>
</feature>
<feature type="site" description="Could be important to modulate the pK values of the two catalytic cysteine residues" evidence="1">
    <location>
        <position position="169"/>
    </location>
</feature>
<feature type="site" description="Could be important to modulate the pK values of the two catalytic cysteine residues" evidence="1">
    <location>
        <position position="218"/>
    </location>
</feature>
<gene>
    <name evidence="1" type="primary">dapF</name>
    <name type="ordered locus">BURPS1106A_0209</name>
</gene>
<keyword id="KW-0028">Amino-acid biosynthesis</keyword>
<keyword id="KW-0963">Cytoplasm</keyword>
<keyword id="KW-0413">Isomerase</keyword>
<keyword id="KW-0457">Lysine biosynthesis</keyword>
<reference key="1">
    <citation type="journal article" date="2010" name="Genome Biol. Evol.">
        <title>Continuing evolution of Burkholderia mallei through genome reduction and large-scale rearrangements.</title>
        <authorList>
            <person name="Losada L."/>
            <person name="Ronning C.M."/>
            <person name="DeShazer D."/>
            <person name="Woods D."/>
            <person name="Fedorova N."/>
            <person name="Kim H.S."/>
            <person name="Shabalina S.A."/>
            <person name="Pearson T.R."/>
            <person name="Brinkac L."/>
            <person name="Tan P."/>
            <person name="Nandi T."/>
            <person name="Crabtree J."/>
            <person name="Badger J."/>
            <person name="Beckstrom-Sternberg S."/>
            <person name="Saqib M."/>
            <person name="Schutzer S.E."/>
            <person name="Keim P."/>
            <person name="Nierman W.C."/>
        </authorList>
    </citation>
    <scope>NUCLEOTIDE SEQUENCE [LARGE SCALE GENOMIC DNA]</scope>
    <source>
        <strain>1106a</strain>
    </source>
</reference>
<accession>A3NQ71</accession>
<comment type="function">
    <text evidence="1">Catalyzes the stereoinversion of LL-2,6-diaminopimelate (L,L-DAP) to meso-diaminopimelate (meso-DAP), a precursor of L-lysine and an essential component of the bacterial peptidoglycan.</text>
</comment>
<comment type="catalytic activity">
    <reaction evidence="1">
        <text>(2S,6S)-2,6-diaminopimelate = meso-2,6-diaminopimelate</text>
        <dbReference type="Rhea" id="RHEA:15393"/>
        <dbReference type="ChEBI" id="CHEBI:57609"/>
        <dbReference type="ChEBI" id="CHEBI:57791"/>
        <dbReference type="EC" id="5.1.1.7"/>
    </reaction>
</comment>
<comment type="pathway">
    <text evidence="1">Amino-acid biosynthesis; L-lysine biosynthesis via DAP pathway; DL-2,6-diaminopimelate from LL-2,6-diaminopimelate: step 1/1.</text>
</comment>
<comment type="subunit">
    <text evidence="1">Homodimer.</text>
</comment>
<comment type="subcellular location">
    <subcellularLocation>
        <location evidence="1">Cytoplasm</location>
    </subcellularLocation>
</comment>
<comment type="similarity">
    <text evidence="1">Belongs to the diaminopimelate epimerase family.</text>
</comment>
<evidence type="ECO:0000255" key="1">
    <source>
        <dbReference type="HAMAP-Rule" id="MF_00197"/>
    </source>
</evidence>
<protein>
    <recommendedName>
        <fullName evidence="1">Diaminopimelate epimerase</fullName>
        <shortName evidence="1">DAP epimerase</shortName>
        <ecNumber evidence="1">5.1.1.7</ecNumber>
    </recommendedName>
    <alternativeName>
        <fullName evidence="1">PLP-independent amino acid racemase</fullName>
    </alternativeName>
</protein>
<name>DAPF_BURP0</name>